<sequence length="668" mass="77193">MDNSIFYSLGNGIKFNKNKYKKEIGIFNGITSHELDKQTKTNNKVHFFKNTTPSTPVISKKDNIKQKKEEEEDNDNDNEESKEDDDFVEDDDNDDDDDDDDEDEENEEPKEKEFIKHQVNNDEEEEDITLFNKSNENENSDDSDDSDDSGKNKNKNKNKKVSKETQEDKHKREIATFRNKHRIKVDGTDIPDPMTEFSQLENRFKVRKYLLNNINEIGYKEPSPIQMQVIPILLKEREVVAIAPTGSGKTASFSIPILQALYEPKKEGFRSVIIAPTRELAQQIYRNFRLLSKGKPFRICVLSKNLHNQSTNENLIKNYDILITTPLRLVYLIKENLLSLNKVEYLVFDEADKLFDKNFQEQVDIVVTACQNPKLKICLFSATMNQQVEELGHSIMKNPIKIIIGEQNAAAITVDQKLIYVGKEEGKLLAVRQLIQKGLEPPILIFTQSKERAHDLFQELIFDGINVDVIHSERTQFQRDTIVKKFRMGKIWVLICTELMARGMDFKGVNFVINFDFPHTLASYIHRIGRTGRAGRPGVAYTLYTDADTPMLPTIVHAMKQSGSHVPDWMLNLKVQGKKKQQYRLKGVERESFSTIPLSERTSSKFKLRKNKKSFNLPGDQQKSNENNNNNNNNNNDNKKRKSFNNNGEKNNNPERKQKQIKKPKKII</sequence>
<organism>
    <name type="scientific">Dictyostelium discoideum</name>
    <name type="common">Social amoeba</name>
    <dbReference type="NCBI Taxonomy" id="44689"/>
    <lineage>
        <taxon>Eukaryota</taxon>
        <taxon>Amoebozoa</taxon>
        <taxon>Evosea</taxon>
        <taxon>Eumycetozoa</taxon>
        <taxon>Dictyostelia</taxon>
        <taxon>Dictyosteliales</taxon>
        <taxon>Dictyosteliaceae</taxon>
        <taxon>Dictyostelium</taxon>
    </lineage>
</organism>
<proteinExistence type="inferred from homology"/>
<dbReference type="EC" id="3.6.4.13"/>
<dbReference type="EMBL" id="AAFI02000012">
    <property type="protein sequence ID" value="EAL70055.1"/>
    <property type="molecule type" value="Genomic_DNA"/>
</dbReference>
<dbReference type="RefSeq" id="XP_643949.1">
    <property type="nucleotide sequence ID" value="XM_638857.1"/>
</dbReference>
<dbReference type="SMR" id="Q86IZ9"/>
<dbReference type="FunCoup" id="Q86IZ9">
    <property type="interactions" value="385"/>
</dbReference>
<dbReference type="STRING" id="44689.Q86IZ9"/>
<dbReference type="GlyGen" id="Q86IZ9">
    <property type="glycosylation" value="1 site"/>
</dbReference>
<dbReference type="PaxDb" id="44689-DDB0234211"/>
<dbReference type="EnsemblProtists" id="EAL70055">
    <property type="protein sequence ID" value="EAL70055"/>
    <property type="gene ID" value="DDB_G0274325"/>
</dbReference>
<dbReference type="GeneID" id="8619377"/>
<dbReference type="KEGG" id="ddi:DDB_G0274325"/>
<dbReference type="dictyBase" id="DDB_G0274325">
    <property type="gene designation" value="ddx52"/>
</dbReference>
<dbReference type="VEuPathDB" id="AmoebaDB:DDB_G0274325"/>
<dbReference type="eggNOG" id="KOG0344">
    <property type="taxonomic scope" value="Eukaryota"/>
</dbReference>
<dbReference type="HOGENOM" id="CLU_003041_1_4_1"/>
<dbReference type="InParanoid" id="Q86IZ9"/>
<dbReference type="OMA" id="DRALMAC"/>
<dbReference type="PhylomeDB" id="Q86IZ9"/>
<dbReference type="Reactome" id="R-DDI-6791226">
    <property type="pathway name" value="Major pathway of rRNA processing in the nucleolus and cytosol"/>
</dbReference>
<dbReference type="PRO" id="PR:Q86IZ9"/>
<dbReference type="Proteomes" id="UP000002195">
    <property type="component" value="Chromosome 2"/>
</dbReference>
<dbReference type="GO" id="GO:0005730">
    <property type="term" value="C:nucleolus"/>
    <property type="evidence" value="ECO:0007669"/>
    <property type="project" value="UniProtKB-SubCell"/>
</dbReference>
<dbReference type="GO" id="GO:0005524">
    <property type="term" value="F:ATP binding"/>
    <property type="evidence" value="ECO:0007669"/>
    <property type="project" value="UniProtKB-KW"/>
</dbReference>
<dbReference type="GO" id="GO:0016887">
    <property type="term" value="F:ATP hydrolysis activity"/>
    <property type="evidence" value="ECO:0007669"/>
    <property type="project" value="RHEA"/>
</dbReference>
<dbReference type="GO" id="GO:0008186">
    <property type="term" value="F:ATP-dependent activity, acting on RNA"/>
    <property type="evidence" value="ECO:0000250"/>
    <property type="project" value="dictyBase"/>
</dbReference>
<dbReference type="GO" id="GO:0003723">
    <property type="term" value="F:RNA binding"/>
    <property type="evidence" value="ECO:0007669"/>
    <property type="project" value="UniProtKB-KW"/>
</dbReference>
<dbReference type="GO" id="GO:0003724">
    <property type="term" value="F:RNA helicase activity"/>
    <property type="evidence" value="ECO:0007669"/>
    <property type="project" value="UniProtKB-EC"/>
</dbReference>
<dbReference type="GO" id="GO:0030490">
    <property type="term" value="P:maturation of SSU-rRNA"/>
    <property type="evidence" value="ECO:0000318"/>
    <property type="project" value="GO_Central"/>
</dbReference>
<dbReference type="CDD" id="cd17957">
    <property type="entry name" value="DEADc_DDX52"/>
    <property type="match status" value="1"/>
</dbReference>
<dbReference type="CDD" id="cd18787">
    <property type="entry name" value="SF2_C_DEAD"/>
    <property type="match status" value="1"/>
</dbReference>
<dbReference type="FunFam" id="3.40.50.300:FF:000759">
    <property type="entry name" value="probable ATP-dependent RNA helicase DDX52"/>
    <property type="match status" value="1"/>
</dbReference>
<dbReference type="Gene3D" id="3.40.50.300">
    <property type="entry name" value="P-loop containing nucleotide triphosphate hydrolases"/>
    <property type="match status" value="2"/>
</dbReference>
<dbReference type="InterPro" id="IPR044764">
    <property type="entry name" value="DDX52/Rok1_DEADc"/>
</dbReference>
<dbReference type="InterPro" id="IPR011545">
    <property type="entry name" value="DEAD/DEAH_box_helicase_dom"/>
</dbReference>
<dbReference type="InterPro" id="IPR050079">
    <property type="entry name" value="DEAD_box_RNA_helicase"/>
</dbReference>
<dbReference type="InterPro" id="IPR014001">
    <property type="entry name" value="Helicase_ATP-bd"/>
</dbReference>
<dbReference type="InterPro" id="IPR001650">
    <property type="entry name" value="Helicase_C-like"/>
</dbReference>
<dbReference type="InterPro" id="IPR027417">
    <property type="entry name" value="P-loop_NTPase"/>
</dbReference>
<dbReference type="InterPro" id="IPR000629">
    <property type="entry name" value="RNA-helicase_DEAD-box_CS"/>
</dbReference>
<dbReference type="PANTHER" id="PTHR47959">
    <property type="entry name" value="ATP-DEPENDENT RNA HELICASE RHLE-RELATED"/>
    <property type="match status" value="1"/>
</dbReference>
<dbReference type="PANTHER" id="PTHR47959:SF15">
    <property type="entry name" value="RNA HELICASE"/>
    <property type="match status" value="1"/>
</dbReference>
<dbReference type="Pfam" id="PF00270">
    <property type="entry name" value="DEAD"/>
    <property type="match status" value="1"/>
</dbReference>
<dbReference type="Pfam" id="PF00271">
    <property type="entry name" value="Helicase_C"/>
    <property type="match status" value="1"/>
</dbReference>
<dbReference type="SMART" id="SM00487">
    <property type="entry name" value="DEXDc"/>
    <property type="match status" value="1"/>
</dbReference>
<dbReference type="SMART" id="SM00490">
    <property type="entry name" value="HELICc"/>
    <property type="match status" value="1"/>
</dbReference>
<dbReference type="SUPFAM" id="SSF52540">
    <property type="entry name" value="P-loop containing nucleoside triphosphate hydrolases"/>
    <property type="match status" value="1"/>
</dbReference>
<dbReference type="PROSITE" id="PS00039">
    <property type="entry name" value="DEAD_ATP_HELICASE"/>
    <property type="match status" value="1"/>
</dbReference>
<dbReference type="PROSITE" id="PS51192">
    <property type="entry name" value="HELICASE_ATP_BIND_1"/>
    <property type="match status" value="1"/>
</dbReference>
<dbReference type="PROSITE" id="PS51194">
    <property type="entry name" value="HELICASE_CTER"/>
    <property type="match status" value="1"/>
</dbReference>
<dbReference type="PROSITE" id="PS51195">
    <property type="entry name" value="Q_MOTIF"/>
    <property type="match status" value="1"/>
</dbReference>
<feature type="chain" id="PRO_0000327437" description="Probable ATP-dependent RNA helicase ddx52">
    <location>
        <begin position="1"/>
        <end position="668"/>
    </location>
</feature>
<feature type="domain" description="Helicase ATP-binding" evidence="2">
    <location>
        <begin position="230"/>
        <end position="402"/>
    </location>
</feature>
<feature type="domain" description="Helicase C-terminal" evidence="3">
    <location>
        <begin position="413"/>
        <end position="574"/>
    </location>
</feature>
<feature type="region of interest" description="Disordered" evidence="4">
    <location>
        <begin position="37"/>
        <end position="174"/>
    </location>
</feature>
<feature type="region of interest" description="Disordered" evidence="4">
    <location>
        <begin position="601"/>
        <end position="668"/>
    </location>
</feature>
<feature type="short sequence motif" description="Q motif">
    <location>
        <begin position="199"/>
        <end position="227"/>
    </location>
</feature>
<feature type="short sequence motif" description="DEAD box">
    <location>
        <begin position="349"/>
        <end position="352"/>
    </location>
</feature>
<feature type="compositionally biased region" description="Polar residues" evidence="4">
    <location>
        <begin position="40"/>
        <end position="57"/>
    </location>
</feature>
<feature type="compositionally biased region" description="Basic and acidic residues" evidence="4">
    <location>
        <begin position="59"/>
        <end position="69"/>
    </location>
</feature>
<feature type="compositionally biased region" description="Acidic residues" evidence="4">
    <location>
        <begin position="70"/>
        <end position="108"/>
    </location>
</feature>
<feature type="compositionally biased region" description="Basic and acidic residues" evidence="4">
    <location>
        <begin position="109"/>
        <end position="120"/>
    </location>
</feature>
<feature type="compositionally biased region" description="Acidic residues" evidence="4">
    <location>
        <begin position="138"/>
        <end position="147"/>
    </location>
</feature>
<feature type="compositionally biased region" description="Basic and acidic residues" evidence="4">
    <location>
        <begin position="161"/>
        <end position="174"/>
    </location>
</feature>
<feature type="compositionally biased region" description="Basic residues" evidence="4">
    <location>
        <begin position="604"/>
        <end position="613"/>
    </location>
</feature>
<feature type="compositionally biased region" description="Low complexity" evidence="4">
    <location>
        <begin position="624"/>
        <end position="636"/>
    </location>
</feature>
<feature type="compositionally biased region" description="Basic residues" evidence="4">
    <location>
        <begin position="659"/>
        <end position="668"/>
    </location>
</feature>
<feature type="binding site" evidence="2">
    <location>
        <begin position="243"/>
        <end position="250"/>
    </location>
    <ligand>
        <name>ATP</name>
        <dbReference type="ChEBI" id="CHEBI:30616"/>
    </ligand>
</feature>
<keyword id="KW-0067">ATP-binding</keyword>
<keyword id="KW-0347">Helicase</keyword>
<keyword id="KW-0378">Hydrolase</keyword>
<keyword id="KW-0547">Nucleotide-binding</keyword>
<keyword id="KW-0539">Nucleus</keyword>
<keyword id="KW-1185">Reference proteome</keyword>
<keyword id="KW-0690">Ribosome biogenesis</keyword>
<keyword id="KW-0694">RNA-binding</keyword>
<keyword id="KW-0698">rRNA processing</keyword>
<comment type="function">
    <text evidence="1">ATP-binding RNA helicase which may be involved in the ribosome biogenesis.</text>
</comment>
<comment type="catalytic activity">
    <reaction>
        <text>ATP + H2O = ADP + phosphate + H(+)</text>
        <dbReference type="Rhea" id="RHEA:13065"/>
        <dbReference type="ChEBI" id="CHEBI:15377"/>
        <dbReference type="ChEBI" id="CHEBI:15378"/>
        <dbReference type="ChEBI" id="CHEBI:30616"/>
        <dbReference type="ChEBI" id="CHEBI:43474"/>
        <dbReference type="ChEBI" id="CHEBI:456216"/>
        <dbReference type="EC" id="3.6.4.13"/>
    </reaction>
</comment>
<comment type="subcellular location">
    <subcellularLocation>
        <location evidence="1">Nucleus</location>
        <location evidence="1">Nucleolus</location>
    </subcellularLocation>
</comment>
<comment type="domain">
    <text>The Q motif is unique to and characteristic of the DEAD box family of RNA helicases and controls ATP binding and hydrolysis.</text>
</comment>
<comment type="similarity">
    <text evidence="5">Belongs to the DEAD box helicase family. DDX52/ROK1 subfamily.</text>
</comment>
<evidence type="ECO:0000250" key="1"/>
<evidence type="ECO:0000255" key="2">
    <source>
        <dbReference type="PROSITE-ProRule" id="PRU00541"/>
    </source>
</evidence>
<evidence type="ECO:0000255" key="3">
    <source>
        <dbReference type="PROSITE-ProRule" id="PRU00542"/>
    </source>
</evidence>
<evidence type="ECO:0000256" key="4">
    <source>
        <dbReference type="SAM" id="MobiDB-lite"/>
    </source>
</evidence>
<evidence type="ECO:0000305" key="5"/>
<name>DDX52_DICDI</name>
<protein>
    <recommendedName>
        <fullName>Probable ATP-dependent RNA helicase ddx52</fullName>
        <ecNumber>3.6.4.13</ecNumber>
    </recommendedName>
    <alternativeName>
        <fullName>DEAD box protein 52</fullName>
    </alternativeName>
</protein>
<gene>
    <name type="primary">ddx52</name>
    <name type="ORF">DDB_G0274325</name>
</gene>
<reference key="1">
    <citation type="journal article" date="2002" name="Nature">
        <title>Sequence and analysis of chromosome 2 of Dictyostelium discoideum.</title>
        <authorList>
            <person name="Gloeckner G."/>
            <person name="Eichinger L."/>
            <person name="Szafranski K."/>
            <person name="Pachebat J.A."/>
            <person name="Bankier A.T."/>
            <person name="Dear P.H."/>
            <person name="Lehmann R."/>
            <person name="Baumgart C."/>
            <person name="Parra G."/>
            <person name="Abril J.F."/>
            <person name="Guigo R."/>
            <person name="Kumpf K."/>
            <person name="Tunggal B."/>
            <person name="Cox E.C."/>
            <person name="Quail M.A."/>
            <person name="Platzer M."/>
            <person name="Rosenthal A."/>
            <person name="Noegel A.A."/>
        </authorList>
    </citation>
    <scope>NUCLEOTIDE SEQUENCE [LARGE SCALE GENOMIC DNA]</scope>
    <source>
        <strain>AX4</strain>
    </source>
</reference>
<reference key="2">
    <citation type="journal article" date="2005" name="Nature">
        <title>The genome of the social amoeba Dictyostelium discoideum.</title>
        <authorList>
            <person name="Eichinger L."/>
            <person name="Pachebat J.A."/>
            <person name="Gloeckner G."/>
            <person name="Rajandream M.A."/>
            <person name="Sucgang R."/>
            <person name="Berriman M."/>
            <person name="Song J."/>
            <person name="Olsen R."/>
            <person name="Szafranski K."/>
            <person name="Xu Q."/>
            <person name="Tunggal B."/>
            <person name="Kummerfeld S."/>
            <person name="Madera M."/>
            <person name="Konfortov B.A."/>
            <person name="Rivero F."/>
            <person name="Bankier A.T."/>
            <person name="Lehmann R."/>
            <person name="Hamlin N."/>
            <person name="Davies R."/>
            <person name="Gaudet P."/>
            <person name="Fey P."/>
            <person name="Pilcher K."/>
            <person name="Chen G."/>
            <person name="Saunders D."/>
            <person name="Sodergren E.J."/>
            <person name="Davis P."/>
            <person name="Kerhornou A."/>
            <person name="Nie X."/>
            <person name="Hall N."/>
            <person name="Anjard C."/>
            <person name="Hemphill L."/>
            <person name="Bason N."/>
            <person name="Farbrother P."/>
            <person name="Desany B."/>
            <person name="Just E."/>
            <person name="Morio T."/>
            <person name="Rost R."/>
            <person name="Churcher C.M."/>
            <person name="Cooper J."/>
            <person name="Haydock S."/>
            <person name="van Driessche N."/>
            <person name="Cronin A."/>
            <person name="Goodhead I."/>
            <person name="Muzny D.M."/>
            <person name="Mourier T."/>
            <person name="Pain A."/>
            <person name="Lu M."/>
            <person name="Harper D."/>
            <person name="Lindsay R."/>
            <person name="Hauser H."/>
            <person name="James K.D."/>
            <person name="Quiles M."/>
            <person name="Madan Babu M."/>
            <person name="Saito T."/>
            <person name="Buchrieser C."/>
            <person name="Wardroper A."/>
            <person name="Felder M."/>
            <person name="Thangavelu M."/>
            <person name="Johnson D."/>
            <person name="Knights A."/>
            <person name="Loulseged H."/>
            <person name="Mungall K.L."/>
            <person name="Oliver K."/>
            <person name="Price C."/>
            <person name="Quail M.A."/>
            <person name="Urushihara H."/>
            <person name="Hernandez J."/>
            <person name="Rabbinowitsch E."/>
            <person name="Steffen D."/>
            <person name="Sanders M."/>
            <person name="Ma J."/>
            <person name="Kohara Y."/>
            <person name="Sharp S."/>
            <person name="Simmonds M.N."/>
            <person name="Spiegler S."/>
            <person name="Tivey A."/>
            <person name="Sugano S."/>
            <person name="White B."/>
            <person name="Walker D."/>
            <person name="Woodward J.R."/>
            <person name="Winckler T."/>
            <person name="Tanaka Y."/>
            <person name="Shaulsky G."/>
            <person name="Schleicher M."/>
            <person name="Weinstock G.M."/>
            <person name="Rosenthal A."/>
            <person name="Cox E.C."/>
            <person name="Chisholm R.L."/>
            <person name="Gibbs R.A."/>
            <person name="Loomis W.F."/>
            <person name="Platzer M."/>
            <person name="Kay R.R."/>
            <person name="Williams J.G."/>
            <person name="Dear P.H."/>
            <person name="Noegel A.A."/>
            <person name="Barrell B.G."/>
            <person name="Kuspa A."/>
        </authorList>
    </citation>
    <scope>NUCLEOTIDE SEQUENCE [LARGE SCALE GENOMIC DNA]</scope>
    <source>
        <strain>AX4</strain>
    </source>
</reference>
<accession>Q86IZ9</accession>
<accession>Q555W1</accession>